<comment type="function">
    <text evidence="1">Probable ion channel inhibitor.</text>
</comment>
<comment type="subcellular location">
    <subcellularLocation>
        <location evidence="1">Secreted</location>
    </subcellularLocation>
</comment>
<comment type="tissue specificity">
    <text>Expressed by the venom gland.</text>
</comment>
<comment type="domain">
    <text evidence="1">The presence of a 'disulfide through disulfide knot' structurally defines this protein as a knottin.</text>
</comment>
<comment type="similarity">
    <text evidence="4">Belongs to the neurotoxin 14 (magi-1) family. 01 (HNTX-16) subfamily.</text>
</comment>
<sequence>MNTVRVTFLLVFVLAVSLGQADKDENRMEMQEKTEQGKSYLDFAENLLLQKLEELEAKLLEEDSEESRNSRQKRCIGEGVPCDENDPRCCSGLVCLKPTLHGIWYKSYYCYKKRSA</sequence>
<keyword id="KW-1015">Disulfide bond</keyword>
<keyword id="KW-0872">Ion channel impairing toxin</keyword>
<keyword id="KW-0960">Knottin</keyword>
<keyword id="KW-0964">Secreted</keyword>
<keyword id="KW-0732">Signal</keyword>
<keyword id="KW-0800">Toxin</keyword>
<organism>
    <name type="scientific">Cyriopagopus hainanus</name>
    <name type="common">Chinese bird spider</name>
    <name type="synonym">Haplopelma hainanum</name>
    <dbReference type="NCBI Taxonomy" id="209901"/>
    <lineage>
        <taxon>Eukaryota</taxon>
        <taxon>Metazoa</taxon>
        <taxon>Ecdysozoa</taxon>
        <taxon>Arthropoda</taxon>
        <taxon>Chelicerata</taxon>
        <taxon>Arachnida</taxon>
        <taxon>Araneae</taxon>
        <taxon>Mygalomorphae</taxon>
        <taxon>Theraphosidae</taxon>
        <taxon>Haplopelma</taxon>
    </lineage>
</organism>
<proteinExistence type="evidence at transcript level"/>
<accession>D2Y271</accession>
<dbReference type="EMBL" id="GU292948">
    <property type="protein sequence ID" value="ADB56764.1"/>
    <property type="molecule type" value="mRNA"/>
</dbReference>
<dbReference type="EMBL" id="GU293124">
    <property type="protein sequence ID" value="ADB56940.1"/>
    <property type="molecule type" value="Genomic_DNA"/>
</dbReference>
<dbReference type="SMR" id="D2Y271"/>
<dbReference type="ArachnoServer" id="AS001665">
    <property type="toxin name" value="U11-theraphotoxin-Hhn1b"/>
</dbReference>
<dbReference type="GO" id="GO:0005576">
    <property type="term" value="C:extracellular region"/>
    <property type="evidence" value="ECO:0007669"/>
    <property type="project" value="UniProtKB-SubCell"/>
</dbReference>
<dbReference type="GO" id="GO:0019871">
    <property type="term" value="F:sodium channel inhibitor activity"/>
    <property type="evidence" value="ECO:0007669"/>
    <property type="project" value="InterPro"/>
</dbReference>
<dbReference type="GO" id="GO:0090729">
    <property type="term" value="F:toxin activity"/>
    <property type="evidence" value="ECO:0007669"/>
    <property type="project" value="UniProtKB-KW"/>
</dbReference>
<dbReference type="InterPro" id="IPR012627">
    <property type="entry name" value="Toxin_22"/>
</dbReference>
<dbReference type="Pfam" id="PF08092">
    <property type="entry name" value="Toxin_22"/>
    <property type="match status" value="1"/>
</dbReference>
<protein>
    <recommendedName>
        <fullName>U11-theraphotoxin-Hhn1b</fullName>
        <shortName>U11-TRTX-Hhn1b</shortName>
    </recommendedName>
    <alternativeName>
        <fullName>Hainantoxin-XVI-2</fullName>
        <shortName>HNTX-XVI-2</shortName>
    </alternativeName>
</protein>
<name>H16B1_CYRHA</name>
<evidence type="ECO:0000250" key="1"/>
<evidence type="ECO:0000255" key="2"/>
<evidence type="ECO:0000256" key="3">
    <source>
        <dbReference type="SAM" id="MobiDB-lite"/>
    </source>
</evidence>
<evidence type="ECO:0000305" key="4"/>
<feature type="signal peptide" evidence="2">
    <location>
        <begin position="1"/>
        <end position="21"/>
    </location>
</feature>
<feature type="propeptide" id="PRO_0000400915" evidence="1">
    <location>
        <begin position="22"/>
        <end position="74"/>
    </location>
</feature>
<feature type="peptide" id="PRO_0000400916" description="U11-theraphotoxin-Hhn1b">
    <location>
        <begin position="75"/>
        <end position="116"/>
    </location>
</feature>
<feature type="region of interest" description="Disordered" evidence="3">
    <location>
        <begin position="60"/>
        <end position="83"/>
    </location>
</feature>
<feature type="compositionally biased region" description="Basic and acidic residues" evidence="3">
    <location>
        <begin position="60"/>
        <end position="69"/>
    </location>
</feature>
<feature type="disulfide bond" evidence="1">
    <location>
        <begin position="75"/>
        <end position="90"/>
    </location>
</feature>
<feature type="disulfide bond" evidence="1">
    <location>
        <begin position="82"/>
        <end position="95"/>
    </location>
</feature>
<feature type="disulfide bond" evidence="1">
    <location>
        <begin position="89"/>
        <end position="110"/>
    </location>
</feature>
<reference key="1">
    <citation type="journal article" date="2010" name="J. Proteome Res.">
        <title>Molecular diversification of peptide toxins from the tarantula Haplopelma hainanum (Ornithoctonus hainana) venom based on transcriptomic, peptidomic, and genomic analyses.</title>
        <authorList>
            <person name="Tang X."/>
            <person name="Zhang Y."/>
            <person name="Hu W."/>
            <person name="Xu D."/>
            <person name="Tao H."/>
            <person name="Yang X."/>
            <person name="Li Y."/>
            <person name="Jiang L."/>
            <person name="Liang S."/>
        </authorList>
    </citation>
    <scope>NUCLEOTIDE SEQUENCE [LARGE SCALE GENOMIC DNA / MRNA]</scope>
    <source>
        <tissue>Venom gland</tissue>
    </source>
</reference>